<keyword id="KW-0963">Cytoplasm</keyword>
<keyword id="KW-1185">Reference proteome</keyword>
<keyword id="KW-0690">Ribosome biogenesis</keyword>
<comment type="function">
    <text evidence="1">One of several proteins that assist in the late maturation steps of the functional core of the 30S ribosomal subunit. Associates with free 30S ribosomal subunits (but not with 30S subunits that are part of 70S ribosomes or polysomes). Required for efficient processing of 16S rRNA. May interact with the 5'-terminal helix region of 16S rRNA.</text>
</comment>
<comment type="subunit">
    <text evidence="1">Monomer. Binds 30S ribosomal subunits, but not 50S ribosomal subunits or 70S ribosomes.</text>
</comment>
<comment type="subcellular location">
    <subcellularLocation>
        <location evidence="1">Cytoplasm</location>
    </subcellularLocation>
</comment>
<comment type="similarity">
    <text evidence="1">Belongs to the RbfA family.</text>
</comment>
<proteinExistence type="inferred from homology"/>
<accession>Q92SW3</accession>
<feature type="chain" id="PRO_0000102718" description="Ribosome-binding factor A">
    <location>
        <begin position="1"/>
        <end position="135"/>
    </location>
</feature>
<dbReference type="EMBL" id="AL591688">
    <property type="protein sequence ID" value="CAC41677.1"/>
    <property type="molecule type" value="Genomic_DNA"/>
</dbReference>
<dbReference type="RefSeq" id="NP_384346.1">
    <property type="nucleotide sequence ID" value="NC_003047.1"/>
</dbReference>
<dbReference type="RefSeq" id="WP_003534366.1">
    <property type="nucleotide sequence ID" value="NC_003047.1"/>
</dbReference>
<dbReference type="SMR" id="Q92SW3"/>
<dbReference type="EnsemblBacteria" id="CAC41677">
    <property type="protein sequence ID" value="CAC41677"/>
    <property type="gene ID" value="SMc00320"/>
</dbReference>
<dbReference type="GeneID" id="89574566"/>
<dbReference type="KEGG" id="sme:SMc00320"/>
<dbReference type="PATRIC" id="fig|266834.11.peg.1606"/>
<dbReference type="eggNOG" id="COG0858">
    <property type="taxonomic scope" value="Bacteria"/>
</dbReference>
<dbReference type="HOGENOM" id="CLU_089475_1_0_5"/>
<dbReference type="OrthoDB" id="9805051at2"/>
<dbReference type="Proteomes" id="UP000001976">
    <property type="component" value="Chromosome"/>
</dbReference>
<dbReference type="GO" id="GO:0005829">
    <property type="term" value="C:cytosol"/>
    <property type="evidence" value="ECO:0007669"/>
    <property type="project" value="TreeGrafter"/>
</dbReference>
<dbReference type="GO" id="GO:0043024">
    <property type="term" value="F:ribosomal small subunit binding"/>
    <property type="evidence" value="ECO:0007669"/>
    <property type="project" value="TreeGrafter"/>
</dbReference>
<dbReference type="GO" id="GO:0030490">
    <property type="term" value="P:maturation of SSU-rRNA"/>
    <property type="evidence" value="ECO:0007669"/>
    <property type="project" value="UniProtKB-UniRule"/>
</dbReference>
<dbReference type="Gene3D" id="3.30.300.20">
    <property type="match status" value="1"/>
</dbReference>
<dbReference type="HAMAP" id="MF_00003">
    <property type="entry name" value="RbfA"/>
    <property type="match status" value="1"/>
</dbReference>
<dbReference type="InterPro" id="IPR015946">
    <property type="entry name" value="KH_dom-like_a/b"/>
</dbReference>
<dbReference type="InterPro" id="IPR000238">
    <property type="entry name" value="RbfA"/>
</dbReference>
<dbReference type="InterPro" id="IPR023799">
    <property type="entry name" value="RbfA_dom_sf"/>
</dbReference>
<dbReference type="InterPro" id="IPR020053">
    <property type="entry name" value="Ribosome-bd_factorA_CS"/>
</dbReference>
<dbReference type="NCBIfam" id="NF001802">
    <property type="entry name" value="PRK00521.2-5"/>
    <property type="match status" value="1"/>
</dbReference>
<dbReference type="NCBIfam" id="TIGR00082">
    <property type="entry name" value="rbfA"/>
    <property type="match status" value="1"/>
</dbReference>
<dbReference type="PANTHER" id="PTHR33515">
    <property type="entry name" value="RIBOSOME-BINDING FACTOR A, CHLOROPLASTIC-RELATED"/>
    <property type="match status" value="1"/>
</dbReference>
<dbReference type="PANTHER" id="PTHR33515:SF1">
    <property type="entry name" value="RIBOSOME-BINDING FACTOR A, CHLOROPLASTIC-RELATED"/>
    <property type="match status" value="1"/>
</dbReference>
<dbReference type="Pfam" id="PF02033">
    <property type="entry name" value="RBFA"/>
    <property type="match status" value="1"/>
</dbReference>
<dbReference type="SUPFAM" id="SSF89919">
    <property type="entry name" value="Ribosome-binding factor A, RbfA"/>
    <property type="match status" value="1"/>
</dbReference>
<dbReference type="PROSITE" id="PS01319">
    <property type="entry name" value="RBFA"/>
    <property type="match status" value="1"/>
</dbReference>
<organism>
    <name type="scientific">Rhizobium meliloti (strain 1021)</name>
    <name type="common">Ensifer meliloti</name>
    <name type="synonym">Sinorhizobium meliloti</name>
    <dbReference type="NCBI Taxonomy" id="266834"/>
    <lineage>
        <taxon>Bacteria</taxon>
        <taxon>Pseudomonadati</taxon>
        <taxon>Pseudomonadota</taxon>
        <taxon>Alphaproteobacteria</taxon>
        <taxon>Hyphomicrobiales</taxon>
        <taxon>Rhizobiaceae</taxon>
        <taxon>Sinorhizobium/Ensifer group</taxon>
        <taxon>Sinorhizobium</taxon>
    </lineage>
</organism>
<name>RBFA_RHIME</name>
<evidence type="ECO:0000255" key="1">
    <source>
        <dbReference type="HAMAP-Rule" id="MF_00003"/>
    </source>
</evidence>
<protein>
    <recommendedName>
        <fullName evidence="1">Ribosome-binding factor A</fullName>
    </recommendedName>
</protein>
<sequence length="135" mass="15183">MAKSTSSAPSQRMLRVGEQVRAAITQVLQRGEVLDPLIENTVISISEVRMSPDLKIATAYVTPLGVADHAAVIEALNKHAKFIRGRLGPQLRQMKYMPDVRFRDDTSFDNYQKIDSLLRSPEVSRDLDRDADDEE</sequence>
<reference key="1">
    <citation type="journal article" date="2001" name="Proc. Natl. Acad. Sci. U.S.A.">
        <title>Analysis of the chromosome sequence of the legume symbiont Sinorhizobium meliloti strain 1021.</title>
        <authorList>
            <person name="Capela D."/>
            <person name="Barloy-Hubler F."/>
            <person name="Gouzy J."/>
            <person name="Bothe G."/>
            <person name="Ampe F."/>
            <person name="Batut J."/>
            <person name="Boistard P."/>
            <person name="Becker A."/>
            <person name="Boutry M."/>
            <person name="Cadieu E."/>
            <person name="Dreano S."/>
            <person name="Gloux S."/>
            <person name="Godrie T."/>
            <person name="Goffeau A."/>
            <person name="Kahn D."/>
            <person name="Kiss E."/>
            <person name="Lelaure V."/>
            <person name="Masuy D."/>
            <person name="Pohl T."/>
            <person name="Portetelle D."/>
            <person name="Puehler A."/>
            <person name="Purnelle B."/>
            <person name="Ramsperger U."/>
            <person name="Renard C."/>
            <person name="Thebault P."/>
            <person name="Vandenbol M."/>
            <person name="Weidner S."/>
            <person name="Galibert F."/>
        </authorList>
    </citation>
    <scope>NUCLEOTIDE SEQUENCE [LARGE SCALE GENOMIC DNA]</scope>
    <source>
        <strain>1021</strain>
    </source>
</reference>
<reference key="2">
    <citation type="journal article" date="2001" name="Science">
        <title>The composite genome of the legume symbiont Sinorhizobium meliloti.</title>
        <authorList>
            <person name="Galibert F."/>
            <person name="Finan T.M."/>
            <person name="Long S.R."/>
            <person name="Puehler A."/>
            <person name="Abola P."/>
            <person name="Ampe F."/>
            <person name="Barloy-Hubler F."/>
            <person name="Barnett M.J."/>
            <person name="Becker A."/>
            <person name="Boistard P."/>
            <person name="Bothe G."/>
            <person name="Boutry M."/>
            <person name="Bowser L."/>
            <person name="Buhrmester J."/>
            <person name="Cadieu E."/>
            <person name="Capela D."/>
            <person name="Chain P."/>
            <person name="Cowie A."/>
            <person name="Davis R.W."/>
            <person name="Dreano S."/>
            <person name="Federspiel N.A."/>
            <person name="Fisher R.F."/>
            <person name="Gloux S."/>
            <person name="Godrie T."/>
            <person name="Goffeau A."/>
            <person name="Golding B."/>
            <person name="Gouzy J."/>
            <person name="Gurjal M."/>
            <person name="Hernandez-Lucas I."/>
            <person name="Hong A."/>
            <person name="Huizar L."/>
            <person name="Hyman R.W."/>
            <person name="Jones T."/>
            <person name="Kahn D."/>
            <person name="Kahn M.L."/>
            <person name="Kalman S."/>
            <person name="Keating D.H."/>
            <person name="Kiss E."/>
            <person name="Komp C."/>
            <person name="Lelaure V."/>
            <person name="Masuy D."/>
            <person name="Palm C."/>
            <person name="Peck M.C."/>
            <person name="Pohl T.M."/>
            <person name="Portetelle D."/>
            <person name="Purnelle B."/>
            <person name="Ramsperger U."/>
            <person name="Surzycki R."/>
            <person name="Thebault P."/>
            <person name="Vandenbol M."/>
            <person name="Vorhoelter F.J."/>
            <person name="Weidner S."/>
            <person name="Wells D.H."/>
            <person name="Wong K."/>
            <person name="Yeh K.-C."/>
            <person name="Batut J."/>
        </authorList>
    </citation>
    <scope>NUCLEOTIDE SEQUENCE [LARGE SCALE GENOMIC DNA]</scope>
    <source>
        <strain>1021</strain>
    </source>
</reference>
<gene>
    <name evidence="1" type="primary">rbfA</name>
    <name type="ordered locus">R00240</name>
    <name type="ORF">SMc00320</name>
</gene>